<accession>Q1GNX0</accession>
<sequence length="55" mass="6447">MAKPTTVKIKLVSTADTGFFYVTKKNPRTMTEKMTVRKYDPRARKHVEFKEAKIK</sequence>
<proteinExistence type="inferred from homology"/>
<feature type="chain" id="PRO_0000356677" description="Large ribosomal subunit protein bL33">
    <location>
        <begin position="1"/>
        <end position="55"/>
    </location>
</feature>
<organism>
    <name type="scientific">Sphingopyxis alaskensis (strain DSM 13593 / LMG 18877 / RB2256)</name>
    <name type="common">Sphingomonas alaskensis</name>
    <dbReference type="NCBI Taxonomy" id="317655"/>
    <lineage>
        <taxon>Bacteria</taxon>
        <taxon>Pseudomonadati</taxon>
        <taxon>Pseudomonadota</taxon>
        <taxon>Alphaproteobacteria</taxon>
        <taxon>Sphingomonadales</taxon>
        <taxon>Sphingomonadaceae</taxon>
        <taxon>Sphingopyxis</taxon>
    </lineage>
</organism>
<comment type="similarity">
    <text evidence="1">Belongs to the bacterial ribosomal protein bL33 family.</text>
</comment>
<gene>
    <name evidence="1" type="primary">rpmG</name>
    <name type="ordered locus">Sala_2947</name>
</gene>
<protein>
    <recommendedName>
        <fullName evidence="1">Large ribosomal subunit protein bL33</fullName>
    </recommendedName>
    <alternativeName>
        <fullName evidence="2">50S ribosomal protein L33</fullName>
    </alternativeName>
</protein>
<keyword id="KW-1185">Reference proteome</keyword>
<keyword id="KW-0687">Ribonucleoprotein</keyword>
<keyword id="KW-0689">Ribosomal protein</keyword>
<evidence type="ECO:0000255" key="1">
    <source>
        <dbReference type="HAMAP-Rule" id="MF_00294"/>
    </source>
</evidence>
<evidence type="ECO:0000305" key="2"/>
<name>RL33_SPHAL</name>
<reference key="1">
    <citation type="journal article" date="2009" name="Proc. Natl. Acad. Sci. U.S.A.">
        <title>The genomic basis of trophic strategy in marine bacteria.</title>
        <authorList>
            <person name="Lauro F.M."/>
            <person name="McDougald D."/>
            <person name="Thomas T."/>
            <person name="Williams T.J."/>
            <person name="Egan S."/>
            <person name="Rice S."/>
            <person name="DeMaere M.Z."/>
            <person name="Ting L."/>
            <person name="Ertan H."/>
            <person name="Johnson J."/>
            <person name="Ferriera S."/>
            <person name="Lapidus A."/>
            <person name="Anderson I."/>
            <person name="Kyrpides N."/>
            <person name="Munk A.C."/>
            <person name="Detter C."/>
            <person name="Han C.S."/>
            <person name="Brown M.V."/>
            <person name="Robb F.T."/>
            <person name="Kjelleberg S."/>
            <person name="Cavicchioli R."/>
        </authorList>
    </citation>
    <scope>NUCLEOTIDE SEQUENCE [LARGE SCALE GENOMIC DNA]</scope>
    <source>
        <strain>DSM 13593 / LMG 18877 / RB2256</strain>
    </source>
</reference>
<dbReference type="EMBL" id="CP000356">
    <property type="protein sequence ID" value="ABF54652.1"/>
    <property type="molecule type" value="Genomic_DNA"/>
</dbReference>
<dbReference type="RefSeq" id="WP_011543216.1">
    <property type="nucleotide sequence ID" value="NC_008048.1"/>
</dbReference>
<dbReference type="SMR" id="Q1GNX0"/>
<dbReference type="STRING" id="317655.Sala_2947"/>
<dbReference type="KEGG" id="sal:Sala_2947"/>
<dbReference type="eggNOG" id="COG0267">
    <property type="taxonomic scope" value="Bacteria"/>
</dbReference>
<dbReference type="HOGENOM" id="CLU_190949_1_1_5"/>
<dbReference type="OrthoDB" id="21586at2"/>
<dbReference type="Proteomes" id="UP000006578">
    <property type="component" value="Chromosome"/>
</dbReference>
<dbReference type="GO" id="GO:0022625">
    <property type="term" value="C:cytosolic large ribosomal subunit"/>
    <property type="evidence" value="ECO:0007669"/>
    <property type="project" value="TreeGrafter"/>
</dbReference>
<dbReference type="GO" id="GO:0003735">
    <property type="term" value="F:structural constituent of ribosome"/>
    <property type="evidence" value="ECO:0007669"/>
    <property type="project" value="InterPro"/>
</dbReference>
<dbReference type="GO" id="GO:0006412">
    <property type="term" value="P:translation"/>
    <property type="evidence" value="ECO:0007669"/>
    <property type="project" value="UniProtKB-UniRule"/>
</dbReference>
<dbReference type="Gene3D" id="2.20.28.120">
    <property type="entry name" value="Ribosomal protein L33"/>
    <property type="match status" value="1"/>
</dbReference>
<dbReference type="HAMAP" id="MF_00294">
    <property type="entry name" value="Ribosomal_bL33"/>
    <property type="match status" value="1"/>
</dbReference>
<dbReference type="InterPro" id="IPR001705">
    <property type="entry name" value="Ribosomal_bL33"/>
</dbReference>
<dbReference type="InterPro" id="IPR018264">
    <property type="entry name" value="Ribosomal_bL33_CS"/>
</dbReference>
<dbReference type="InterPro" id="IPR038584">
    <property type="entry name" value="Ribosomal_bL33_sf"/>
</dbReference>
<dbReference type="InterPro" id="IPR011332">
    <property type="entry name" value="Ribosomal_zn-bd"/>
</dbReference>
<dbReference type="NCBIfam" id="NF001860">
    <property type="entry name" value="PRK00595.1"/>
    <property type="match status" value="1"/>
</dbReference>
<dbReference type="NCBIfam" id="TIGR01023">
    <property type="entry name" value="rpmG_bact"/>
    <property type="match status" value="1"/>
</dbReference>
<dbReference type="PANTHER" id="PTHR15238">
    <property type="entry name" value="54S RIBOSOMAL PROTEIN L39, MITOCHONDRIAL"/>
    <property type="match status" value="1"/>
</dbReference>
<dbReference type="PANTHER" id="PTHR15238:SF1">
    <property type="entry name" value="LARGE RIBOSOMAL SUBUNIT PROTEIN BL33M"/>
    <property type="match status" value="1"/>
</dbReference>
<dbReference type="Pfam" id="PF00471">
    <property type="entry name" value="Ribosomal_L33"/>
    <property type="match status" value="1"/>
</dbReference>
<dbReference type="SUPFAM" id="SSF57829">
    <property type="entry name" value="Zn-binding ribosomal proteins"/>
    <property type="match status" value="1"/>
</dbReference>
<dbReference type="PROSITE" id="PS00582">
    <property type="entry name" value="RIBOSOMAL_L33"/>
    <property type="match status" value="1"/>
</dbReference>